<reference key="1">
    <citation type="submission" date="2006-08" db="EMBL/GenBank/DDBJ databases">
        <authorList>
            <consortium name="NIH - Zebrafish Gene Collection (ZGC) project"/>
        </authorList>
    </citation>
    <scope>NUCLEOTIDE SEQUENCE [LARGE SCALE MRNA]</scope>
    <source>
        <tissue>Olfactory epithelium</tissue>
    </source>
</reference>
<gene>
    <name type="primary">dcakd</name>
    <name type="ORF">zgc:153150</name>
</gene>
<comment type="similarity">
    <text evidence="2">Belongs to the CoaE family.</text>
</comment>
<name>DCAKD_DANRE</name>
<feature type="chain" id="PRO_0000316852" description="Dephospho-CoA kinase domain-containing protein">
    <location>
        <begin position="1"/>
        <end position="229"/>
    </location>
</feature>
<feature type="domain" description="DPCK">
    <location>
        <begin position="3"/>
        <end position="207"/>
    </location>
</feature>
<feature type="binding site" evidence="1">
    <location>
        <begin position="8"/>
        <end position="15"/>
    </location>
    <ligand>
        <name>ATP</name>
        <dbReference type="ChEBI" id="CHEBI:30616"/>
    </ligand>
</feature>
<accession>Q0P4C4</accession>
<keyword id="KW-0067">ATP-binding</keyword>
<keyword id="KW-0547">Nucleotide-binding</keyword>
<keyword id="KW-1185">Reference proteome</keyword>
<sequence length="229" mass="25811">MFLVGLTGGIASGKSTVSSQLKELGCPVIDADVVARKVVEPQTAAYRLIVRHFGQEVLSENGEIDRKKLGQIIFSSPEKRRLLNSITHPEIHKEMLKQILLYFIKGYRYVILNVPLLFETRRLTRFLTHTVVVYCDPATQLSRLMQRDALSQTEAEQRISAQMPLKEKRGLANHVIENSGSREDTHRQVLRLHSKLDDCMQFLIIRAVAVAALTGLGGLFIYTVKIITS</sequence>
<protein>
    <recommendedName>
        <fullName>Dephospho-CoA kinase domain-containing protein</fullName>
    </recommendedName>
</protein>
<evidence type="ECO:0000255" key="1"/>
<evidence type="ECO:0000305" key="2"/>
<organism>
    <name type="scientific">Danio rerio</name>
    <name type="common">Zebrafish</name>
    <name type="synonym">Brachydanio rerio</name>
    <dbReference type="NCBI Taxonomy" id="7955"/>
    <lineage>
        <taxon>Eukaryota</taxon>
        <taxon>Metazoa</taxon>
        <taxon>Chordata</taxon>
        <taxon>Craniata</taxon>
        <taxon>Vertebrata</taxon>
        <taxon>Euteleostomi</taxon>
        <taxon>Actinopterygii</taxon>
        <taxon>Neopterygii</taxon>
        <taxon>Teleostei</taxon>
        <taxon>Ostariophysi</taxon>
        <taxon>Cypriniformes</taxon>
        <taxon>Danionidae</taxon>
        <taxon>Danioninae</taxon>
        <taxon>Danio</taxon>
    </lineage>
</organism>
<dbReference type="EMBL" id="BC122159">
    <property type="protein sequence ID" value="AAI22160.1"/>
    <property type="molecule type" value="mRNA"/>
</dbReference>
<dbReference type="SMR" id="Q0P4C4"/>
<dbReference type="FunCoup" id="Q0P4C4">
    <property type="interactions" value="1039"/>
</dbReference>
<dbReference type="STRING" id="7955.ENSDARP00000082563"/>
<dbReference type="PaxDb" id="7955-ENSDARP00000082563"/>
<dbReference type="AGR" id="ZFIN:ZDB-GENE-060825-226"/>
<dbReference type="ZFIN" id="ZDB-GENE-060825-226">
    <property type="gene designation" value="dcakd"/>
</dbReference>
<dbReference type="eggNOG" id="KOG3220">
    <property type="taxonomic scope" value="Eukaryota"/>
</dbReference>
<dbReference type="InParanoid" id="Q0P4C4"/>
<dbReference type="OrthoDB" id="247245at2759"/>
<dbReference type="PhylomeDB" id="Q0P4C4"/>
<dbReference type="Reactome" id="R-DRE-196783">
    <property type="pathway name" value="Coenzyme A biosynthesis"/>
</dbReference>
<dbReference type="PRO" id="PR:Q0P4C4"/>
<dbReference type="Proteomes" id="UP000000437">
    <property type="component" value="Unplaced"/>
</dbReference>
<dbReference type="GO" id="GO:0005524">
    <property type="term" value="F:ATP binding"/>
    <property type="evidence" value="ECO:0007669"/>
    <property type="project" value="UniProtKB-KW"/>
</dbReference>
<dbReference type="GO" id="GO:0004140">
    <property type="term" value="F:dephospho-CoA kinase activity"/>
    <property type="evidence" value="ECO:0000318"/>
    <property type="project" value="GO_Central"/>
</dbReference>
<dbReference type="GO" id="GO:0015937">
    <property type="term" value="P:coenzyme A biosynthetic process"/>
    <property type="evidence" value="ECO:0000318"/>
    <property type="project" value="GO_Central"/>
</dbReference>
<dbReference type="CDD" id="cd02022">
    <property type="entry name" value="DPCK"/>
    <property type="match status" value="1"/>
</dbReference>
<dbReference type="FunFam" id="3.40.50.300:FF:000485">
    <property type="entry name" value="Dephospho-CoA kinase CAB5"/>
    <property type="match status" value="1"/>
</dbReference>
<dbReference type="Gene3D" id="3.40.50.300">
    <property type="entry name" value="P-loop containing nucleotide triphosphate hydrolases"/>
    <property type="match status" value="1"/>
</dbReference>
<dbReference type="HAMAP" id="MF_00376">
    <property type="entry name" value="Dephospho_CoA_kinase"/>
    <property type="match status" value="1"/>
</dbReference>
<dbReference type="InterPro" id="IPR001977">
    <property type="entry name" value="Depp_CoAkinase"/>
</dbReference>
<dbReference type="InterPro" id="IPR027417">
    <property type="entry name" value="P-loop_NTPase"/>
</dbReference>
<dbReference type="NCBIfam" id="TIGR00152">
    <property type="entry name" value="dephospho-CoA kinase"/>
    <property type="match status" value="1"/>
</dbReference>
<dbReference type="PANTHER" id="PTHR10695:SF46">
    <property type="entry name" value="BIFUNCTIONAL COENZYME A SYNTHASE-RELATED"/>
    <property type="match status" value="1"/>
</dbReference>
<dbReference type="PANTHER" id="PTHR10695">
    <property type="entry name" value="DEPHOSPHO-COA KINASE-RELATED"/>
    <property type="match status" value="1"/>
</dbReference>
<dbReference type="Pfam" id="PF01121">
    <property type="entry name" value="CoaE"/>
    <property type="match status" value="1"/>
</dbReference>
<dbReference type="SUPFAM" id="SSF52540">
    <property type="entry name" value="P-loop containing nucleoside triphosphate hydrolases"/>
    <property type="match status" value="1"/>
</dbReference>
<dbReference type="PROSITE" id="PS51219">
    <property type="entry name" value="DPCK"/>
    <property type="match status" value="1"/>
</dbReference>
<proteinExistence type="evidence at transcript level"/>